<evidence type="ECO:0000255" key="1">
    <source>
        <dbReference type="HAMAP-Rule" id="MF_00201"/>
    </source>
</evidence>
<dbReference type="EMBL" id="CP000090">
    <property type="protein sequence ID" value="AAZ61613.1"/>
    <property type="molecule type" value="Genomic_DNA"/>
</dbReference>
<dbReference type="SMR" id="Q46Z20"/>
<dbReference type="STRING" id="264198.Reut_A2250"/>
<dbReference type="KEGG" id="reu:Reut_A2250"/>
<dbReference type="eggNOG" id="COG1381">
    <property type="taxonomic scope" value="Bacteria"/>
</dbReference>
<dbReference type="HOGENOM" id="CLU_066645_0_0_4"/>
<dbReference type="OrthoDB" id="9804792at2"/>
<dbReference type="GO" id="GO:0043590">
    <property type="term" value="C:bacterial nucleoid"/>
    <property type="evidence" value="ECO:0007669"/>
    <property type="project" value="TreeGrafter"/>
</dbReference>
<dbReference type="GO" id="GO:0006310">
    <property type="term" value="P:DNA recombination"/>
    <property type="evidence" value="ECO:0007669"/>
    <property type="project" value="UniProtKB-UniRule"/>
</dbReference>
<dbReference type="GO" id="GO:0006302">
    <property type="term" value="P:double-strand break repair"/>
    <property type="evidence" value="ECO:0007669"/>
    <property type="project" value="TreeGrafter"/>
</dbReference>
<dbReference type="Gene3D" id="2.40.50.140">
    <property type="entry name" value="Nucleic acid-binding proteins"/>
    <property type="match status" value="1"/>
</dbReference>
<dbReference type="Gene3D" id="1.20.1440.120">
    <property type="entry name" value="Recombination protein O, C-terminal domain"/>
    <property type="match status" value="1"/>
</dbReference>
<dbReference type="HAMAP" id="MF_00201">
    <property type="entry name" value="RecO"/>
    <property type="match status" value="1"/>
</dbReference>
<dbReference type="InterPro" id="IPR037278">
    <property type="entry name" value="ARFGAP/RecO"/>
</dbReference>
<dbReference type="InterPro" id="IPR022572">
    <property type="entry name" value="DNA_rep/recomb_RecO_N"/>
</dbReference>
<dbReference type="InterPro" id="IPR012340">
    <property type="entry name" value="NA-bd_OB-fold"/>
</dbReference>
<dbReference type="InterPro" id="IPR003717">
    <property type="entry name" value="RecO"/>
</dbReference>
<dbReference type="InterPro" id="IPR042242">
    <property type="entry name" value="RecO_C"/>
</dbReference>
<dbReference type="NCBIfam" id="TIGR00613">
    <property type="entry name" value="reco"/>
    <property type="match status" value="1"/>
</dbReference>
<dbReference type="PANTHER" id="PTHR33991">
    <property type="entry name" value="DNA REPAIR PROTEIN RECO"/>
    <property type="match status" value="1"/>
</dbReference>
<dbReference type="PANTHER" id="PTHR33991:SF1">
    <property type="entry name" value="DNA REPAIR PROTEIN RECO"/>
    <property type="match status" value="1"/>
</dbReference>
<dbReference type="Pfam" id="PF02565">
    <property type="entry name" value="RecO_C"/>
    <property type="match status" value="1"/>
</dbReference>
<dbReference type="Pfam" id="PF11967">
    <property type="entry name" value="RecO_N"/>
    <property type="match status" value="1"/>
</dbReference>
<dbReference type="SUPFAM" id="SSF57863">
    <property type="entry name" value="ArfGap/RecO-like zinc finger"/>
    <property type="match status" value="1"/>
</dbReference>
<dbReference type="SUPFAM" id="SSF50249">
    <property type="entry name" value="Nucleic acid-binding proteins"/>
    <property type="match status" value="1"/>
</dbReference>
<comment type="function">
    <text evidence="1">Involved in DNA repair and RecF pathway recombination.</text>
</comment>
<comment type="similarity">
    <text evidence="1">Belongs to the RecO family.</text>
</comment>
<accession>Q46Z20</accession>
<keyword id="KW-0227">DNA damage</keyword>
<keyword id="KW-0233">DNA recombination</keyword>
<keyword id="KW-0234">DNA repair</keyword>
<reference key="1">
    <citation type="journal article" date="2010" name="PLoS ONE">
        <title>The complete multipartite genome sequence of Cupriavidus necator JMP134, a versatile pollutant degrader.</title>
        <authorList>
            <person name="Lykidis A."/>
            <person name="Perez-Pantoja D."/>
            <person name="Ledger T."/>
            <person name="Mavromatis K."/>
            <person name="Anderson I.J."/>
            <person name="Ivanova N.N."/>
            <person name="Hooper S.D."/>
            <person name="Lapidus A."/>
            <person name="Lucas S."/>
            <person name="Gonzalez B."/>
            <person name="Kyrpides N.C."/>
        </authorList>
    </citation>
    <scope>NUCLEOTIDE SEQUENCE [LARGE SCALE GENOMIC DNA]</scope>
    <source>
        <strain>JMP134 / LMG 1197</strain>
    </source>
</reference>
<feature type="chain" id="PRO_0000264831" description="DNA repair protein RecO">
    <location>
        <begin position="1"/>
        <end position="291"/>
    </location>
</feature>
<name>RECO_CUPPJ</name>
<gene>
    <name evidence="1" type="primary">recO</name>
    <name type="ordered locus">Reut_A2250</name>
</gene>
<protein>
    <recommendedName>
        <fullName evidence="1">DNA repair protein RecO</fullName>
    </recommendedName>
    <alternativeName>
        <fullName evidence="1">Recombination protein O</fullName>
    </alternativeName>
</protein>
<organism>
    <name type="scientific">Cupriavidus pinatubonensis (strain JMP 134 / LMG 1197)</name>
    <name type="common">Cupriavidus necator (strain JMP 134)</name>
    <dbReference type="NCBI Taxonomy" id="264198"/>
    <lineage>
        <taxon>Bacteria</taxon>
        <taxon>Pseudomonadati</taxon>
        <taxon>Pseudomonadota</taxon>
        <taxon>Betaproteobacteria</taxon>
        <taxon>Burkholderiales</taxon>
        <taxon>Burkholderiaceae</taxon>
        <taxon>Cupriavidus</taxon>
    </lineage>
</organism>
<sequence>MPDFARGPAKARRADPVVDEAAELLDSRALPGMADAAGRAMMDRAMRIVPARSETRVSEQPGFVLHAWPYRETSLILDVFTRDHGRLSMVAKGAKRPHSALRPVLQHFHPISLSWSGRGEVKTLTRAEWVGGMPPLAGDALLSAFYLNELLMRFCPREDGHPALFRHYMATLTRLAHGEAAGLVLRSFERVLLQETGFAVAFDQCLSTGERVQPHLDYVYQPERGVRRAQPSDPSSWPVVSGQTLLDMSQDDYGRAQTALQSRALMRFLLHYYLQGAPLKTRQILIDLHYL</sequence>
<proteinExistence type="inferred from homology"/>